<sequence length="1263" mass="138039">MRGLPRGRGLMRARGRGRAAPTGGRGRGRGGAHRGRGRPRSLLSLPRAQASWAPQLPAGLTGPPVPCLPSQGEAPAEMGALLLEKEPRGAAERVHSSLGDTPQSEETLPKANPDSLEPAGPSSPASVTVTVGDEGADTPVGAASLIGDEPESLEGDGGRIVLGHATKSFPSSPSKGGACPSRAKMSMTGAGKSPPSVQSLAMRLLSMPGAQGAATAGPEPSPATTAAQEGQPKVHRARKTMSKPSNGQPPIPEKRPPEVQHFRMSDDMHLGKVTSDVAKRRKLNSGSLSEDLGSAGGSGDIILEKGEPRPLEEWETVVGDDFSLYYDAYSVDERVDSDSKSEVEALAEQLSEEEEEEEEEEEEEEEEEEEEEEEEEDEESGNQSDRSGSSGRRKAKKKWRKDSPWVKPSRKRRKREPPRAKEPRGVNGVGSSGPSEYMEVPLGSLELPSEGTLSPNHAGVSNDTSSLETERGFEELPLCSCRMEAPKIDRISERAGHKCMATESVDGELLGCNAAILKRETMRPSSRVALMVLCEAHRARMVKHHCCPGCGYFCTAGTFLECHPDFRVAHRFHKACVSQLNGMVFCPHCGEDASEAQEVTIPRGDGGTPPIGTAAPALPPLAHDAPGRADTSQPSARMRGHGEPRRPPCDPLADTIDSSGPSLTLPNGGCLSAVGLPPGPGREALEKALVIQESERRKKLRFHPRQLYLSVKQGELQKVILMLLDNLDPNFQSDQQSKRTPLHAAAQKGSVEICHVLLQAGANINAVDKQQRTPLMEAVVNNHLEVARYMVQLGGCVYSKEEDGSTCLHHAAKIGNLEMVSLLLSTGQVDVNAQDSGGWTPIIWAAEHKHIDVIRMLLTRGADVTLTDNEENICLHWASFTGSAAIAEVLLNAQCDLHAVNYHGDTPLHIAARESYHDCVLLFLSRGANPELRNKEGDTAWDLTPERSDVWFALQLNRKLRLGVGNRAVRTEKIICRDVARGYENVPIPCVNGVDGEPCPEDYKYISENCETSTMNIDRNITHLQHCTCVDDCSSSNCLCGQLSIRCWYDKDGRLLQEFNKIEPPLIFECNQACSCWRSCKNRVVQSGIKVRLQLYRTAKMGWGVRALQTIPQGTFICEYVGELISDAEADVREDDSYLFDLDNKDGEVYCIDARYYGNISRFINHLCDPNIIPVRVFMLHQDLRFPRIAFFSSRDIRTGEELGFDYGDRFWDIKSKYFTCQCGSEKCKHSAEAIALEQSRLARLDPHPELLPDLSSLPPINT</sequence>
<accession>Q9Z148</accession>
<accession>A2CG75</accession>
<accession>Q6PE08</accession>
<accession>Q8K4R6</accession>
<accession>Q8K4R7</accession>
<accession>Q9Z149</accession>
<feature type="chain" id="PRO_0000186069" description="Histone-lysine N-methyltransferase EHMT2">
    <location>
        <begin position="1"/>
        <end position="1263"/>
    </location>
</feature>
<feature type="repeat" description="ANK 1">
    <location>
        <begin position="702"/>
        <end position="731"/>
    </location>
</feature>
<feature type="repeat" description="ANK 2">
    <location>
        <begin position="737"/>
        <end position="766"/>
    </location>
</feature>
<feature type="repeat" description="ANK 3">
    <location>
        <begin position="770"/>
        <end position="799"/>
    </location>
</feature>
<feature type="repeat" description="ANK 4">
    <location>
        <begin position="803"/>
        <end position="833"/>
    </location>
</feature>
<feature type="repeat" description="ANK 5">
    <location>
        <begin position="837"/>
        <end position="866"/>
    </location>
</feature>
<feature type="repeat" description="ANK 6">
    <location>
        <begin position="870"/>
        <end position="899"/>
    </location>
</feature>
<feature type="repeat" description="ANK 7">
    <location>
        <begin position="903"/>
        <end position="932"/>
    </location>
</feature>
<feature type="domain" description="Pre-SET" evidence="3">
    <location>
        <begin position="1025"/>
        <end position="1088"/>
    </location>
</feature>
<feature type="domain" description="SET" evidence="4">
    <location>
        <begin position="1091"/>
        <end position="1208"/>
    </location>
</feature>
<feature type="domain" description="Post-SET">
    <location>
        <begin position="1217"/>
        <end position="1233"/>
    </location>
</feature>
<feature type="region of interest" description="Disordered" evidence="5">
    <location>
        <begin position="1"/>
        <end position="314"/>
    </location>
</feature>
<feature type="region of interest" description="Disordered" evidence="5">
    <location>
        <begin position="332"/>
        <end position="439"/>
    </location>
</feature>
<feature type="region of interest" description="Disordered" evidence="5">
    <location>
        <begin position="621"/>
        <end position="647"/>
    </location>
</feature>
<feature type="region of interest" description="Histone H3K9me binding" evidence="1">
    <location>
        <begin position="870"/>
        <end position="872"/>
    </location>
</feature>
<feature type="region of interest" description="Interaction with histone H3" evidence="1">
    <location>
        <begin position="1127"/>
        <end position="1146"/>
    </location>
</feature>
<feature type="region of interest" description="Interaction with histone H3" evidence="1">
    <location>
        <begin position="1207"/>
        <end position="1210"/>
    </location>
</feature>
<feature type="compositionally biased region" description="Basic residues" evidence="5">
    <location>
        <begin position="26"/>
        <end position="39"/>
    </location>
</feature>
<feature type="compositionally biased region" description="Basic and acidic residues" evidence="5">
    <location>
        <begin position="83"/>
        <end position="95"/>
    </location>
</feature>
<feature type="compositionally biased region" description="Basic and acidic residues" evidence="5">
    <location>
        <begin position="252"/>
        <end position="270"/>
    </location>
</feature>
<feature type="compositionally biased region" description="Basic and acidic residues" evidence="5">
    <location>
        <begin position="302"/>
        <end position="312"/>
    </location>
</feature>
<feature type="compositionally biased region" description="Basic and acidic residues" evidence="5">
    <location>
        <begin position="332"/>
        <end position="343"/>
    </location>
</feature>
<feature type="compositionally biased region" description="Acidic residues" evidence="5">
    <location>
        <begin position="350"/>
        <end position="380"/>
    </location>
</feature>
<feature type="compositionally biased region" description="Basic residues" evidence="5">
    <location>
        <begin position="391"/>
        <end position="400"/>
    </location>
</feature>
<feature type="binding site" evidence="1">
    <location>
        <position position="1027"/>
    </location>
    <ligand>
        <name>Zn(2+)</name>
        <dbReference type="ChEBI" id="CHEBI:29105"/>
        <label>1</label>
    </ligand>
</feature>
<feature type="binding site" evidence="1">
    <location>
        <position position="1027"/>
    </location>
    <ligand>
        <name>Zn(2+)</name>
        <dbReference type="ChEBI" id="CHEBI:29105"/>
        <label>2</label>
    </ligand>
</feature>
<feature type="binding site" evidence="1">
    <location>
        <position position="1029"/>
    </location>
    <ligand>
        <name>Zn(2+)</name>
        <dbReference type="ChEBI" id="CHEBI:29105"/>
        <label>1</label>
    </ligand>
</feature>
<feature type="binding site" evidence="1">
    <location>
        <position position="1033"/>
    </location>
    <ligand>
        <name>Zn(2+)</name>
        <dbReference type="ChEBI" id="CHEBI:29105"/>
        <label>1</label>
    </ligand>
</feature>
<feature type="binding site" evidence="1">
    <location>
        <position position="1033"/>
    </location>
    <ligand>
        <name>Zn(2+)</name>
        <dbReference type="ChEBI" id="CHEBI:29105"/>
        <label>3</label>
    </ligand>
</feature>
<feature type="binding site" evidence="1">
    <location>
        <position position="1038"/>
    </location>
    <ligand>
        <name>Zn(2+)</name>
        <dbReference type="ChEBI" id="CHEBI:29105"/>
        <label>1</label>
    </ligand>
</feature>
<feature type="binding site" evidence="1">
    <location>
        <position position="1040"/>
    </location>
    <ligand>
        <name>Zn(2+)</name>
        <dbReference type="ChEBI" id="CHEBI:29105"/>
        <label>2</label>
    </ligand>
</feature>
<feature type="binding site" evidence="1">
    <location>
        <position position="1070"/>
    </location>
    <ligand>
        <name>Zn(2+)</name>
        <dbReference type="ChEBI" id="CHEBI:29105"/>
        <label>2</label>
    </ligand>
</feature>
<feature type="binding site" evidence="1">
    <location>
        <position position="1070"/>
    </location>
    <ligand>
        <name>Zn(2+)</name>
        <dbReference type="ChEBI" id="CHEBI:29105"/>
        <label>3</label>
    </ligand>
</feature>
<feature type="binding site" evidence="1">
    <location>
        <position position="1074"/>
    </location>
    <ligand>
        <name>Zn(2+)</name>
        <dbReference type="ChEBI" id="CHEBI:29105"/>
        <label>2</label>
    </ligand>
</feature>
<feature type="binding site" evidence="1">
    <location>
        <position position="1076"/>
    </location>
    <ligand>
        <name>Zn(2+)</name>
        <dbReference type="ChEBI" id="CHEBI:29105"/>
        <label>3</label>
    </ligand>
</feature>
<feature type="binding site" evidence="1">
    <location>
        <position position="1080"/>
    </location>
    <ligand>
        <name>Zn(2+)</name>
        <dbReference type="ChEBI" id="CHEBI:29105"/>
        <label>3</label>
    </ligand>
</feature>
<feature type="binding site" evidence="1">
    <location>
        <begin position="1101"/>
        <end position="1103"/>
    </location>
    <ligand>
        <name>S-adenosyl-L-methionine</name>
        <dbReference type="ChEBI" id="CHEBI:59789"/>
    </ligand>
</feature>
<feature type="binding site" evidence="4">
    <location>
        <position position="1138"/>
    </location>
    <ligand>
        <name>S-adenosyl-L-methionine</name>
        <dbReference type="ChEBI" id="CHEBI:59789"/>
    </ligand>
</feature>
<feature type="binding site" evidence="1">
    <location>
        <begin position="1165"/>
        <end position="1166"/>
    </location>
    <ligand>
        <name>S-adenosyl-L-methionine</name>
        <dbReference type="ChEBI" id="CHEBI:59789"/>
    </ligand>
</feature>
<feature type="binding site" evidence="1">
    <location>
        <position position="1168"/>
    </location>
    <ligand>
        <name>Zn(2+)</name>
        <dbReference type="ChEBI" id="CHEBI:29105"/>
        <label>4</label>
    </ligand>
</feature>
<feature type="binding site" evidence="1">
    <location>
        <position position="1221"/>
    </location>
    <ligand>
        <name>Zn(2+)</name>
        <dbReference type="ChEBI" id="CHEBI:29105"/>
        <label>4</label>
    </ligand>
</feature>
<feature type="binding site" evidence="1">
    <location>
        <position position="1223"/>
    </location>
    <ligand>
        <name>Zn(2+)</name>
        <dbReference type="ChEBI" id="CHEBI:29105"/>
        <label>4</label>
    </ligand>
</feature>
<feature type="binding site" evidence="1">
    <location>
        <position position="1228"/>
    </location>
    <ligand>
        <name>Zn(2+)</name>
        <dbReference type="ChEBI" id="CHEBI:29105"/>
        <label>4</label>
    </ligand>
</feature>
<feature type="site" description="Histone H3K9me binding" evidence="1">
    <location>
        <position position="1120"/>
    </location>
</feature>
<feature type="modified residue" description="Asymmetric dimethylarginine" evidence="20">
    <location>
        <position position="40"/>
    </location>
</feature>
<feature type="modified residue" description="Phosphoserine" evidence="2">
    <location>
        <position position="97"/>
    </location>
</feature>
<feature type="modified residue" description="Phosphothreonine" evidence="2">
    <location>
        <position position="101"/>
    </location>
</feature>
<feature type="modified residue" description="Phosphoserine" evidence="2">
    <location>
        <position position="104"/>
    </location>
</feature>
<feature type="modified residue" description="Phosphoserine" evidence="19">
    <location>
        <position position="193"/>
    </location>
</feature>
<feature type="modified residue" description="N6,N6,N6-trimethyllysine; by EHMT2; alternate" evidence="2">
    <location>
        <position position="239"/>
    </location>
</feature>
<feature type="modified residue" description="N6,N6-dimethyllysine; by EHMT2; alternate" evidence="2">
    <location>
        <position position="239"/>
    </location>
</feature>
<feature type="modified residue" description="Phosphoserine" evidence="2">
    <location>
        <position position="285"/>
    </location>
</feature>
<feature type="modified residue" description="Phosphoserine" evidence="2">
    <location>
        <position position="294"/>
    </location>
</feature>
<feature type="modified residue" description="Phosphoserine" evidence="2">
    <location>
        <position position="298"/>
    </location>
</feature>
<feature type="modified residue" description="Phosphoserine" evidence="2">
    <location>
        <position position="403"/>
    </location>
</feature>
<feature type="modified residue" description="Phosphoserine" evidence="19">
    <location>
        <position position="465"/>
    </location>
</feature>
<feature type="modified residue" description="Phosphoserine" evidence="19">
    <location>
        <position position="466"/>
    </location>
</feature>
<feature type="modified residue" description="Phosphothreonine" evidence="2">
    <location>
        <position position="608"/>
    </location>
</feature>
<feature type="modified residue" description="Phosphoserine" evidence="2">
    <location>
        <position position="1257"/>
    </location>
</feature>
<feature type="modified residue" description="Phosphothreonine" evidence="2">
    <location>
        <position position="1263"/>
    </location>
</feature>
<feature type="cross-link" description="Glycyl lysine isopeptide (Lys-Gly) (interchain with G-Cter in SUMO2)" evidence="2">
    <location>
        <position position="272"/>
    </location>
</feature>
<feature type="cross-link" description="Glycyl lysine isopeptide (Lys-Gly) (interchain with G-Cter in SUMO2)" evidence="2">
    <location>
        <position position="282"/>
    </location>
</feature>
<feature type="cross-link" description="Glycyl lysine isopeptide (Lys-Gly) (interchain with G-Cter in SUMO2)" evidence="2">
    <location>
        <position position="687"/>
    </location>
</feature>
<feature type="splice variant" id="VSP_002214" description="In isoform 2 and isoform 3." evidence="15 16">
    <location>
        <begin position="1"/>
        <end position="57"/>
    </location>
</feature>
<feature type="splice variant" id="VSP_002215" description="In isoform 2 and isoform 3." evidence="15 16">
    <original>AGLTGPPVPCLPSQ</original>
    <variation>MAAAAGAAAAAAAE</variation>
    <location>
        <begin position="58"/>
        <end position="71"/>
    </location>
</feature>
<feature type="splice variant" id="VSP_002216" description="In isoform 2." evidence="15">
    <location>
        <begin position="426"/>
        <end position="459"/>
    </location>
</feature>
<feature type="mutagenesis site" description="In GM7; defective in methyltransferase activity without affecting DNA methylation; when associated with F-1207." evidence="10">
    <original>Y</original>
    <variation>V</variation>
    <location>
        <position position="1120"/>
    </location>
</feature>
<feature type="mutagenesis site" description="Strongly reduces histone methyltransferase activity." evidence="6">
    <original>R</original>
    <variation>H</variation>
    <location>
        <position position="1162"/>
    </location>
</feature>
<feature type="mutagenesis site" description="Abolishes histone methyltransferase activity and subsequent repression. In GM3; does not form heterodimer with EHMT1 and is defective in mediating both H3K9me and DNA methylation." evidence="7 10">
    <location>
        <begin position="1165"/>
        <end position="1168"/>
    </location>
</feature>
<feature type="mutagenesis site" description="In GM6; does not form heterodimer with EHMT1 and is defective in mediating H3K9me." evidence="10">
    <original>NH</original>
    <variation>LE</variation>
    <location>
        <begin position="1165"/>
        <end position="1166"/>
    </location>
</feature>
<feature type="mutagenesis site" description="In GM4; defective in methyltransferase activity without affecting DNA methylation." evidence="10">
    <original>C</original>
    <variation>A</variation>
    <location>
        <position position="1168"/>
    </location>
</feature>
<feature type="mutagenesis site" description="In GM7; defective in methyltransferase activity without affecting DNA methylation; when associated with V-1120." evidence="10">
    <original>Y</original>
    <variation>F</variation>
    <location>
        <position position="1207"/>
    </location>
</feature>
<evidence type="ECO:0000250" key="1"/>
<evidence type="ECO:0000250" key="2">
    <source>
        <dbReference type="UniProtKB" id="Q96KQ7"/>
    </source>
</evidence>
<evidence type="ECO:0000255" key="3">
    <source>
        <dbReference type="PROSITE-ProRule" id="PRU00157"/>
    </source>
</evidence>
<evidence type="ECO:0000255" key="4">
    <source>
        <dbReference type="PROSITE-ProRule" id="PRU00190"/>
    </source>
</evidence>
<evidence type="ECO:0000256" key="5">
    <source>
        <dbReference type="SAM" id="MobiDB-lite"/>
    </source>
</evidence>
<evidence type="ECO:0000269" key="6">
    <source>
    </source>
</evidence>
<evidence type="ECO:0000269" key="7">
    <source>
    </source>
</evidence>
<evidence type="ECO:0000269" key="8">
    <source>
    </source>
</evidence>
<evidence type="ECO:0000269" key="9">
    <source>
    </source>
</evidence>
<evidence type="ECO:0000269" key="10">
    <source>
    </source>
</evidence>
<evidence type="ECO:0000269" key="11">
    <source>
    </source>
</evidence>
<evidence type="ECO:0000269" key="12">
    <source>
    </source>
</evidence>
<evidence type="ECO:0000269" key="13">
    <source>
    </source>
</evidence>
<evidence type="ECO:0000269" key="14">
    <source>
    </source>
</evidence>
<evidence type="ECO:0000303" key="15">
    <source>
    </source>
</evidence>
<evidence type="ECO:0000303" key="16">
    <source>
    </source>
</evidence>
<evidence type="ECO:0000305" key="17"/>
<evidence type="ECO:0000305" key="18">
    <source>
    </source>
</evidence>
<evidence type="ECO:0007744" key="19">
    <source>
    </source>
</evidence>
<evidence type="ECO:0007744" key="20">
    <source>
    </source>
</evidence>
<proteinExistence type="evidence at protein level"/>
<name>EHMT2_MOUSE</name>
<keyword id="KW-0025">Alternative splicing</keyword>
<keyword id="KW-0040">ANK repeat</keyword>
<keyword id="KW-0156">Chromatin regulator</keyword>
<keyword id="KW-0158">Chromosome</keyword>
<keyword id="KW-1017">Isopeptide bond</keyword>
<keyword id="KW-0479">Metal-binding</keyword>
<keyword id="KW-0488">Methylation</keyword>
<keyword id="KW-0489">Methyltransferase</keyword>
<keyword id="KW-0539">Nucleus</keyword>
<keyword id="KW-0597">Phosphoprotein</keyword>
<keyword id="KW-1185">Reference proteome</keyword>
<keyword id="KW-0677">Repeat</keyword>
<keyword id="KW-0949">S-adenosyl-L-methionine</keyword>
<keyword id="KW-0808">Transferase</keyword>
<keyword id="KW-0832">Ubl conjugation</keyword>
<keyword id="KW-0862">Zinc</keyword>
<organism>
    <name type="scientific">Mus musculus</name>
    <name type="common">Mouse</name>
    <dbReference type="NCBI Taxonomy" id="10090"/>
    <lineage>
        <taxon>Eukaryota</taxon>
        <taxon>Metazoa</taxon>
        <taxon>Chordata</taxon>
        <taxon>Craniata</taxon>
        <taxon>Vertebrata</taxon>
        <taxon>Euteleostomi</taxon>
        <taxon>Mammalia</taxon>
        <taxon>Eutheria</taxon>
        <taxon>Euarchontoglires</taxon>
        <taxon>Glires</taxon>
        <taxon>Rodentia</taxon>
        <taxon>Myomorpha</taxon>
        <taxon>Muroidea</taxon>
        <taxon>Muridae</taxon>
        <taxon>Murinae</taxon>
        <taxon>Mus</taxon>
        <taxon>Mus</taxon>
    </lineage>
</organism>
<protein>
    <recommendedName>
        <fullName>Histone-lysine N-methyltransferase EHMT2</fullName>
        <ecNumber evidence="6 8">2.1.1.-</ecNumber>
        <ecNumber evidence="6 8">2.1.1.367</ecNumber>
    </recommendedName>
    <alternativeName>
        <fullName>Euchromatic histone-lysine N-methyltransferase 2</fullName>
    </alternativeName>
    <alternativeName>
        <fullName>HLA-B-associated transcript 8</fullName>
    </alternativeName>
    <alternativeName>
        <fullName>Histone H3-K9 methyltransferase 3</fullName>
        <shortName>H3-K9-HMTase 3</shortName>
    </alternativeName>
    <alternativeName>
        <fullName>Protein G9a</fullName>
    </alternativeName>
</protein>
<reference key="1">
    <citation type="journal article" date="2002" name="Genes Dev.">
        <title>G9a histone methyltransferase plays a dominant role in euchromatic histone H3 lysine 9 methylation and is essential for early embryogenesis.</title>
        <authorList>
            <person name="Tachibana M."/>
            <person name="Sugimoto K."/>
            <person name="Nozaki M."/>
            <person name="Ueda J."/>
            <person name="Ohta T."/>
            <person name="Ohki M."/>
            <person name="Fukuda M."/>
            <person name="Takeda N."/>
            <person name="Niida H."/>
            <person name="Kato H."/>
            <person name="Shinkai Y."/>
        </authorList>
    </citation>
    <scope>NUCLEOTIDE SEQUENCE [MRNA] (ISOFORMS 1 AND 2)</scope>
    <scope>MUTAGENESIS OF 1165-ASN--CYS-1168</scope>
    <scope>DISRUPTION PHENOTYPE</scope>
    <scope>FUNCTION</scope>
</reference>
<reference key="2">
    <citation type="journal article" date="2003" name="Genome Res.">
        <title>Analysis of the gene-dense major histocompatibility complex class III region and its comparison to mouse.</title>
        <authorList>
            <person name="Xie T."/>
            <person name="Rowen L."/>
            <person name="Aguado B."/>
            <person name="Ahearn M.E."/>
            <person name="Madan A."/>
            <person name="Qin S."/>
            <person name="Campbell R.D."/>
            <person name="Hood L."/>
        </authorList>
    </citation>
    <scope>NUCLEOTIDE SEQUENCE [LARGE SCALE GENOMIC DNA]</scope>
    <source>
        <strain>129</strain>
    </source>
</reference>
<reference key="3">
    <citation type="journal article" date="2009" name="PLoS Biol.">
        <title>Lineage-specific biology revealed by a finished genome assembly of the mouse.</title>
        <authorList>
            <person name="Church D.M."/>
            <person name="Goodstadt L."/>
            <person name="Hillier L.W."/>
            <person name="Zody M.C."/>
            <person name="Goldstein S."/>
            <person name="She X."/>
            <person name="Bult C.J."/>
            <person name="Agarwala R."/>
            <person name="Cherry J.L."/>
            <person name="DiCuccio M."/>
            <person name="Hlavina W."/>
            <person name="Kapustin Y."/>
            <person name="Meric P."/>
            <person name="Maglott D."/>
            <person name="Birtle Z."/>
            <person name="Marques A.C."/>
            <person name="Graves T."/>
            <person name="Zhou S."/>
            <person name="Teague B."/>
            <person name="Potamousis K."/>
            <person name="Churas C."/>
            <person name="Place M."/>
            <person name="Herschleb J."/>
            <person name="Runnheim R."/>
            <person name="Forrest D."/>
            <person name="Amos-Landgraf J."/>
            <person name="Schwartz D.C."/>
            <person name="Cheng Z."/>
            <person name="Lindblad-Toh K."/>
            <person name="Eichler E.E."/>
            <person name="Ponting C.P."/>
        </authorList>
    </citation>
    <scope>NUCLEOTIDE SEQUENCE [LARGE SCALE GENOMIC DNA]</scope>
    <source>
        <strain>C57BL/6J</strain>
    </source>
</reference>
<reference key="4">
    <citation type="journal article" date="2004" name="Genome Res.">
        <title>The status, quality, and expansion of the NIH full-length cDNA project: the Mammalian Gene Collection (MGC).</title>
        <authorList>
            <consortium name="The MGC Project Team"/>
        </authorList>
    </citation>
    <scope>NUCLEOTIDE SEQUENCE [LARGE SCALE MRNA] (ISOFORM 3)</scope>
    <source>
        <tissue>Mammary tumor</tissue>
    </source>
</reference>
<reference key="5">
    <citation type="journal article" date="2001" name="Mamm. Genome">
        <title>Novel NG36/G9a gene products encoded within the human and mouse MHC class III regions.</title>
        <authorList>
            <person name="Brown S.E."/>
            <person name="Campbell R.D."/>
            <person name="Sanderson C.M."/>
        </authorList>
    </citation>
    <scope>ALTERNATIVE SPLICING (ISOFORM 2)</scope>
</reference>
<reference key="6">
    <citation type="journal article" date="2001" name="J. Biol. Chem.">
        <title>Set domain-containing protein, G9a, is a novel lysine-preferring mammalian histone methyltransferase with hyperactivity and specific selectivity to lysines 9 and 27 of histone H3.</title>
        <authorList>
            <person name="Tachibana M."/>
            <person name="Sugimoto K."/>
            <person name="Fukushima T."/>
            <person name="Shinkai Y."/>
        </authorList>
    </citation>
    <scope>CATALYTIC ACTIVITY</scope>
    <scope>SUBCELLULAR LOCATION</scope>
    <scope>MUTAGENESIS OF ARG-1162</scope>
</reference>
<reference key="7">
    <citation type="journal article" date="2005" name="Genes Dev.">
        <title>Histone methyltransferases G9a and GLP form heteromeric complexes and are both crucial for methylation of euchromatin at H3-K9.</title>
        <authorList>
            <person name="Tachibana M."/>
            <person name="Ueda J."/>
            <person name="Fukuda M."/>
            <person name="Takeda N."/>
            <person name="Ohta T."/>
            <person name="Iwanari H."/>
            <person name="Sakihama T."/>
            <person name="Kodama T."/>
            <person name="Hamakubo T."/>
            <person name="Shinkai Y."/>
        </authorList>
    </citation>
    <scope>FUNCTION</scope>
    <scope>CATALYTIC ACTIVITY</scope>
    <scope>SUBCELLULAR LOCATION</scope>
    <scope>INTERACTION WITH EHMT1</scope>
    <scope>TISSUE SPECIFICITY</scope>
</reference>
<reference key="8">
    <citation type="journal article" date="2006" name="J. Biol. Chem.">
        <title>Zinc finger protein Wiz links G9a/GLP histone methyltransferases to the co-repressor molecule CtBP.</title>
        <authorList>
            <person name="Ueda J."/>
            <person name="Tachibana M."/>
            <person name="Ikura T."/>
            <person name="Shinkai Y."/>
        </authorList>
    </citation>
    <scope>INTERACTION WITH WIZ AND EHMT1</scope>
</reference>
<reference key="9">
    <citation type="journal article" date="2008" name="EMBO J.">
        <title>G9a/GLP complexes independently mediate H3K9 and DNA methylation to silence transcription.</title>
        <authorList>
            <person name="Tachibana M."/>
            <person name="Matsumura Y."/>
            <person name="Fukuda M."/>
            <person name="Kimura H."/>
            <person name="Shinkai Y."/>
        </authorList>
    </citation>
    <scope>FUNCTION</scope>
    <scope>MUTAGENESIS OF TYR-1120; 1165-ASN--CYS-1168; 1165-ASN-HIS-1166; CYS-1168 AND TYR-1207</scope>
</reference>
<reference key="10">
    <citation type="journal article" date="2009" name="Nucleic Acids Res.">
        <title>UHRF1 binds G9a and participates in p21 transcriptional regulation in mammalian cells.</title>
        <authorList>
            <person name="Kim J.K."/>
            <person name="Esteve P.O."/>
            <person name="Jacobsen S.E."/>
            <person name="Pradhan S."/>
        </authorList>
    </citation>
    <scope>INTERACTION WITH UHRF1</scope>
</reference>
<reference key="11">
    <citation type="journal article" date="2010" name="Cell">
        <title>A tissue-specific atlas of mouse protein phosphorylation and expression.</title>
        <authorList>
            <person name="Huttlin E.L."/>
            <person name="Jedrychowski M.P."/>
            <person name="Elias J.E."/>
            <person name="Goswami T."/>
            <person name="Rad R."/>
            <person name="Beausoleil S.A."/>
            <person name="Villen J."/>
            <person name="Haas W."/>
            <person name="Sowa M.E."/>
            <person name="Gygi S.P."/>
        </authorList>
    </citation>
    <scope>PHOSPHORYLATION [LARGE SCALE ANALYSIS] AT SER-193; SER-465 AND SER-466</scope>
    <scope>IDENTIFICATION BY MASS SPECTROMETRY [LARGE SCALE ANALYSIS]</scope>
    <source>
        <tissue>Brown adipose tissue</tissue>
        <tissue>Kidney</tissue>
        <tissue>Liver</tissue>
        <tissue>Lung</tissue>
        <tissue>Spleen</tissue>
        <tissue>Testis</tissue>
    </source>
</reference>
<reference key="12">
    <citation type="journal article" date="2012" name="Mol. Cell">
        <title>Histone H3 lysine 56 methylation regulates DNA replication through its interaction with PCNA.</title>
        <authorList>
            <person name="Yu Y."/>
            <person name="Song C."/>
            <person name="Zhang Q."/>
            <person name="Dimaggio P.A."/>
            <person name="Garcia B.A."/>
            <person name="York A."/>
            <person name="Carey M.F."/>
            <person name="Grunstein M."/>
        </authorList>
    </citation>
    <scope>FUNCTION</scope>
</reference>
<reference key="13">
    <citation type="journal article" date="2012" name="PLoS ONE">
        <title>The MSX1 homeoprotein recruits G9a methyltransferase to repressed target genes in myoblast cells.</title>
        <authorList>
            <person name="Wang J."/>
            <person name="Abate-Shen C."/>
        </authorList>
    </citation>
    <scope>RETRACTED PAPER</scope>
</reference>
<reference key="14">
    <citation type="journal article" date="2023" name="PLoS ONE">
        <authorList>
            <consortium name="PLOS ONE Editors"/>
        </authorList>
    </citation>
    <scope>RETRACTION NOTICE OF PUBMED:22629437</scope>
</reference>
<reference key="15">
    <citation type="journal article" date="2014" name="Mol. Cell. Proteomics">
        <title>Immunoaffinity enrichment and mass spectrometry analysis of protein methylation.</title>
        <authorList>
            <person name="Guo A."/>
            <person name="Gu H."/>
            <person name="Zhou J."/>
            <person name="Mulhern D."/>
            <person name="Wang Y."/>
            <person name="Lee K.A."/>
            <person name="Yang V."/>
            <person name="Aguiar M."/>
            <person name="Kornhauser J."/>
            <person name="Jia X."/>
            <person name="Ren J."/>
            <person name="Beausoleil S.A."/>
            <person name="Silva J.C."/>
            <person name="Vemulapalli V."/>
            <person name="Bedford M.T."/>
            <person name="Comb M.J."/>
        </authorList>
    </citation>
    <scope>METHYLATION [LARGE SCALE ANALYSIS] AT ARG-40</scope>
    <scope>IDENTIFICATION BY MASS SPECTROMETRY [LARGE SCALE ANALYSIS]</scope>
    <source>
        <tissue>Embryo</tissue>
    </source>
</reference>
<reference key="16">
    <citation type="journal article" date="2017" name="Epigenetics Chromatin">
        <title>SMYD5 regulates H4K20me3-marked heterochromatin to safeguard ES cell self-renewal and prevent spurious differentiation.</title>
        <authorList>
            <person name="Kidder B.L."/>
            <person name="Hu G."/>
            <person name="Cui K."/>
            <person name="Zhao K."/>
        </authorList>
    </citation>
    <scope>INTERACTION WITH SMYD5</scope>
</reference>
<reference key="17">
    <citation type="journal article" date="2017" name="Mol. Biol. Cell">
        <title>PRDM9 interactions with other proteins provide a link between recombination hotspots and the chromosomal axis in meiosis.</title>
        <authorList>
            <person name="Parvanov E.D."/>
            <person name="Tian H."/>
            <person name="Billings T."/>
            <person name="Saxl R.L."/>
            <person name="Spruce C."/>
            <person name="Aithal R."/>
            <person name="Krejci L."/>
            <person name="Paigen K."/>
            <person name="Petkov P.M."/>
        </authorList>
    </citation>
    <scope>INTERACTION WITH PRDM9 AND CDYL</scope>
</reference>
<dbReference type="EC" id="2.1.1.-" evidence="6 8"/>
<dbReference type="EC" id="2.1.1.367" evidence="6 8"/>
<dbReference type="EMBL" id="AF109906">
    <property type="protein sequence ID" value="AAC84164.1"/>
    <property type="status" value="ALT_SEQ"/>
    <property type="molecule type" value="Genomic_DNA"/>
</dbReference>
<dbReference type="EMBL" id="AF109906">
    <property type="protein sequence ID" value="AAC84165.1"/>
    <property type="status" value="ALT_SEQ"/>
    <property type="molecule type" value="Genomic_DNA"/>
</dbReference>
<dbReference type="EMBL" id="AB077209">
    <property type="protein sequence ID" value="BAC05482.1"/>
    <property type="molecule type" value="mRNA"/>
</dbReference>
<dbReference type="EMBL" id="AB077210">
    <property type="protein sequence ID" value="BAC05483.1"/>
    <property type="molecule type" value="mRNA"/>
</dbReference>
<dbReference type="EMBL" id="CT025759">
    <property type="status" value="NOT_ANNOTATED_CDS"/>
    <property type="molecule type" value="Genomic_DNA"/>
</dbReference>
<dbReference type="EMBL" id="BC025539">
    <property type="protein sequence ID" value="AAH25539.1"/>
    <property type="status" value="ALT_INIT"/>
    <property type="molecule type" value="mRNA"/>
</dbReference>
<dbReference type="EMBL" id="BC058357">
    <property type="protein sequence ID" value="AAH58357.1"/>
    <property type="status" value="ALT_INIT"/>
    <property type="molecule type" value="mRNA"/>
</dbReference>
<dbReference type="CCDS" id="CCDS28666.1">
    <molecule id="Q9Z148-2"/>
</dbReference>
<dbReference type="CCDS" id="CCDS28667.1">
    <molecule id="Q9Z148-1"/>
</dbReference>
<dbReference type="CCDS" id="CCDS70797.1">
    <molecule id="Q9Z148-3"/>
</dbReference>
<dbReference type="RefSeq" id="NP_001273502.1">
    <property type="nucleotide sequence ID" value="NM_001286573.1"/>
</dbReference>
<dbReference type="RefSeq" id="NP_001273504.1">
    <molecule id="Q9Z148-3"/>
    <property type="nucleotide sequence ID" value="NM_001286575.2"/>
</dbReference>
<dbReference type="RefSeq" id="NP_665829.1">
    <molecule id="Q9Z148-1"/>
    <property type="nucleotide sequence ID" value="NM_145830.3"/>
</dbReference>
<dbReference type="RefSeq" id="NP_671493.1">
    <molecule id="Q9Z148-2"/>
    <property type="nucleotide sequence ID" value="NM_147151.3"/>
</dbReference>
<dbReference type="SMR" id="Q9Z148"/>
<dbReference type="BioGRID" id="225335">
    <property type="interactions" value="62"/>
</dbReference>
<dbReference type="CORUM" id="Q9Z148"/>
<dbReference type="DIP" id="DIP-31916N"/>
<dbReference type="FunCoup" id="Q9Z148">
    <property type="interactions" value="3296"/>
</dbReference>
<dbReference type="IntAct" id="Q9Z148">
    <property type="interactions" value="16"/>
</dbReference>
<dbReference type="MINT" id="Q9Z148"/>
<dbReference type="STRING" id="10090.ENSMUSP00000013931"/>
<dbReference type="BindingDB" id="Q9Z148"/>
<dbReference type="ChEMBL" id="CHEMBL2169718"/>
<dbReference type="GlyGen" id="Q9Z148">
    <property type="glycosylation" value="2 sites"/>
</dbReference>
<dbReference type="iPTMnet" id="Q9Z148"/>
<dbReference type="PhosphoSitePlus" id="Q9Z148"/>
<dbReference type="jPOST" id="Q9Z148"/>
<dbReference type="PaxDb" id="10090-ENSMUSP00000013931"/>
<dbReference type="PeptideAtlas" id="Q9Z148"/>
<dbReference type="ProteomicsDB" id="277573">
    <molecule id="Q9Z148-1"/>
</dbReference>
<dbReference type="ProteomicsDB" id="277574">
    <molecule id="Q9Z148-2"/>
</dbReference>
<dbReference type="ProteomicsDB" id="277575">
    <molecule id="Q9Z148-3"/>
</dbReference>
<dbReference type="Pumba" id="Q9Z148"/>
<dbReference type="Antibodypedia" id="27888">
    <property type="antibodies" value="371 antibodies from 40 providers"/>
</dbReference>
<dbReference type="DNASU" id="110147"/>
<dbReference type="Ensembl" id="ENSMUST00000013931.12">
    <molecule id="Q9Z148-1"/>
    <property type="protein sequence ID" value="ENSMUSP00000013931.6"/>
    <property type="gene ID" value="ENSMUSG00000013787.16"/>
</dbReference>
<dbReference type="Ensembl" id="ENSMUST00000078061.13">
    <molecule id="Q9Z148-2"/>
    <property type="protein sequence ID" value="ENSMUSP00000077208.7"/>
    <property type="gene ID" value="ENSMUSG00000013787.16"/>
</dbReference>
<dbReference type="Ensembl" id="ENSMUST00000114033.9">
    <molecule id="Q9Z148-3"/>
    <property type="protein sequence ID" value="ENSMUSP00000109667.3"/>
    <property type="gene ID" value="ENSMUSG00000013787.16"/>
</dbReference>
<dbReference type="GeneID" id="110147"/>
<dbReference type="KEGG" id="mmu:110147"/>
<dbReference type="UCSC" id="uc008ceb.3">
    <molecule id="Q9Z148-2"/>
    <property type="organism name" value="mouse"/>
</dbReference>
<dbReference type="UCSC" id="uc008cec.3">
    <molecule id="Q9Z148-3"/>
    <property type="organism name" value="mouse"/>
</dbReference>
<dbReference type="UCSC" id="uc008ced.3">
    <molecule id="Q9Z148-1"/>
    <property type="organism name" value="mouse"/>
</dbReference>
<dbReference type="AGR" id="MGI:2148922"/>
<dbReference type="CTD" id="10919"/>
<dbReference type="MGI" id="MGI:2148922">
    <property type="gene designation" value="Ehmt2"/>
</dbReference>
<dbReference type="VEuPathDB" id="HostDB:ENSMUSG00000013787"/>
<dbReference type="eggNOG" id="KOG1082">
    <property type="taxonomic scope" value="Eukaryota"/>
</dbReference>
<dbReference type="GeneTree" id="ENSGT00940000159459"/>
<dbReference type="HOGENOM" id="CLU_005790_0_0_1"/>
<dbReference type="InParanoid" id="Q9Z148"/>
<dbReference type="OMA" id="PNHAGNC"/>
<dbReference type="OrthoDB" id="5792673at2759"/>
<dbReference type="PhylomeDB" id="Q9Z148"/>
<dbReference type="TreeFam" id="TF106443"/>
<dbReference type="BRENDA" id="1.21.99.4">
    <property type="organism ID" value="3474"/>
</dbReference>
<dbReference type="BRENDA" id="2.1.1.355">
    <property type="organism ID" value="3474"/>
</dbReference>
<dbReference type="BRENDA" id="2.1.1.368">
    <property type="organism ID" value="3474"/>
</dbReference>
<dbReference type="Reactome" id="R-MMU-2559582">
    <property type="pathway name" value="Senescence-Associated Secretory Phenotype (SASP)"/>
</dbReference>
<dbReference type="Reactome" id="R-MMU-3214841">
    <property type="pathway name" value="PKMTs methylate histone lysines"/>
</dbReference>
<dbReference type="Reactome" id="R-MMU-6804760">
    <property type="pathway name" value="Regulation of TP53 Activity through Methylation"/>
</dbReference>
<dbReference type="Reactome" id="R-MMU-73762">
    <property type="pathway name" value="RNA Polymerase I Transcription Initiation"/>
</dbReference>
<dbReference type="Reactome" id="R-MMU-8953750">
    <property type="pathway name" value="Transcriptional Regulation by E2F6"/>
</dbReference>
<dbReference type="BioGRID-ORCS" id="110147">
    <property type="hits" value="10 hits in 83 CRISPR screens"/>
</dbReference>
<dbReference type="ChiTaRS" id="Ehmt2">
    <property type="organism name" value="mouse"/>
</dbReference>
<dbReference type="PRO" id="PR:Q9Z148"/>
<dbReference type="Proteomes" id="UP000000589">
    <property type="component" value="Chromosome 17"/>
</dbReference>
<dbReference type="RNAct" id="Q9Z148">
    <property type="molecule type" value="protein"/>
</dbReference>
<dbReference type="Bgee" id="ENSMUSG00000013787">
    <property type="expression patterns" value="Expressed in gonadal ridge and 265 other cell types or tissues"/>
</dbReference>
<dbReference type="ExpressionAtlas" id="Q9Z148">
    <property type="expression patterns" value="baseline and differential"/>
</dbReference>
<dbReference type="GO" id="GO:0000785">
    <property type="term" value="C:chromatin"/>
    <property type="evidence" value="ECO:0000266"/>
    <property type="project" value="MGI"/>
</dbReference>
<dbReference type="GO" id="GO:0016607">
    <property type="term" value="C:nuclear speck"/>
    <property type="evidence" value="ECO:0007669"/>
    <property type="project" value="Ensembl"/>
</dbReference>
<dbReference type="GO" id="GO:0005654">
    <property type="term" value="C:nucleoplasm"/>
    <property type="evidence" value="ECO:0000304"/>
    <property type="project" value="Reactome"/>
</dbReference>
<dbReference type="GO" id="GO:0005634">
    <property type="term" value="C:nucleus"/>
    <property type="evidence" value="ECO:0000314"/>
    <property type="project" value="UniProtKB"/>
</dbReference>
<dbReference type="GO" id="GO:0070742">
    <property type="term" value="F:C2H2 zinc finger domain binding"/>
    <property type="evidence" value="ECO:0000353"/>
    <property type="project" value="UniProtKB"/>
</dbReference>
<dbReference type="GO" id="GO:0046976">
    <property type="term" value="F:histone H3K27 methyltransferase activity"/>
    <property type="evidence" value="ECO:0000314"/>
    <property type="project" value="UniProtKB"/>
</dbReference>
<dbReference type="GO" id="GO:0140759">
    <property type="term" value="F:histone H3K56 methyltransferase activity"/>
    <property type="evidence" value="ECO:0000315"/>
    <property type="project" value="UniProtKB"/>
</dbReference>
<dbReference type="GO" id="GO:0046974">
    <property type="term" value="F:histone H3K9 methyltransferase activity"/>
    <property type="evidence" value="ECO:0000314"/>
    <property type="project" value="UniProtKB"/>
</dbReference>
<dbReference type="GO" id="GO:0140947">
    <property type="term" value="F:histone H3K9me2 methyltransferase activity"/>
    <property type="evidence" value="ECO:0007669"/>
    <property type="project" value="RHEA"/>
</dbReference>
<dbReference type="GO" id="GO:0002039">
    <property type="term" value="F:p53 binding"/>
    <property type="evidence" value="ECO:0007669"/>
    <property type="project" value="Ensembl"/>
</dbReference>
<dbReference type="GO" id="GO:1990841">
    <property type="term" value="F:promoter-specific chromatin binding"/>
    <property type="evidence" value="ECO:0000314"/>
    <property type="project" value="MGI"/>
</dbReference>
<dbReference type="GO" id="GO:0016279">
    <property type="term" value="F:protein-lysine N-methyltransferase activity"/>
    <property type="evidence" value="ECO:0000314"/>
    <property type="project" value="MGI"/>
</dbReference>
<dbReference type="GO" id="GO:0000977">
    <property type="term" value="F:RNA polymerase II transcription regulatory region sequence-specific DNA binding"/>
    <property type="evidence" value="ECO:0000314"/>
    <property type="project" value="MGI"/>
</dbReference>
<dbReference type="GO" id="GO:0001222">
    <property type="term" value="F:transcription corepressor binding"/>
    <property type="evidence" value="ECO:0007669"/>
    <property type="project" value="Ensembl"/>
</dbReference>
<dbReference type="GO" id="GO:0008270">
    <property type="term" value="F:zinc ion binding"/>
    <property type="evidence" value="ECO:0007669"/>
    <property type="project" value="InterPro"/>
</dbReference>
<dbReference type="GO" id="GO:0048148">
    <property type="term" value="P:behavioral response to cocaine"/>
    <property type="evidence" value="ECO:0000315"/>
    <property type="project" value="MGI"/>
</dbReference>
<dbReference type="GO" id="GO:0071314">
    <property type="term" value="P:cellular response to cocaine"/>
    <property type="evidence" value="ECO:0000314"/>
    <property type="project" value="MGI"/>
</dbReference>
<dbReference type="GO" id="GO:0009267">
    <property type="term" value="P:cellular response to starvation"/>
    <property type="evidence" value="ECO:0000266"/>
    <property type="project" value="MGI"/>
</dbReference>
<dbReference type="GO" id="GO:0006346">
    <property type="term" value="P:DNA methylation-dependent constitutive heterochromatin formation"/>
    <property type="evidence" value="ECO:0000314"/>
    <property type="project" value="UniProtKB"/>
</dbReference>
<dbReference type="GO" id="GO:0009566">
    <property type="term" value="P:fertilization"/>
    <property type="evidence" value="ECO:0000315"/>
    <property type="project" value="MGI"/>
</dbReference>
<dbReference type="GO" id="GO:1902902">
    <property type="term" value="P:negative regulation of autophagosome assembly"/>
    <property type="evidence" value="ECO:0000315"/>
    <property type="project" value="MGI"/>
</dbReference>
<dbReference type="GO" id="GO:0044027">
    <property type="term" value="P:negative regulation of gene expression via chromosomal CpG island methylation"/>
    <property type="evidence" value="ECO:0000315"/>
    <property type="project" value="MGI"/>
</dbReference>
<dbReference type="GO" id="GO:0000122">
    <property type="term" value="P:negative regulation of transcription by RNA polymerase II"/>
    <property type="evidence" value="ECO:0000315"/>
    <property type="project" value="MGI"/>
</dbReference>
<dbReference type="GO" id="GO:0048665">
    <property type="term" value="P:neuron fate specification"/>
    <property type="evidence" value="ECO:0000315"/>
    <property type="project" value="MGI"/>
</dbReference>
<dbReference type="GO" id="GO:0048599">
    <property type="term" value="P:oocyte development"/>
    <property type="evidence" value="ECO:0000315"/>
    <property type="project" value="MGI"/>
</dbReference>
<dbReference type="GO" id="GO:0035265">
    <property type="term" value="P:organ growth"/>
    <property type="evidence" value="ECO:0000315"/>
    <property type="project" value="MGI"/>
</dbReference>
<dbReference type="GO" id="GO:0018027">
    <property type="term" value="P:peptidyl-lysine dimethylation"/>
    <property type="evidence" value="ECO:0000250"/>
    <property type="project" value="UniProtKB"/>
</dbReference>
<dbReference type="GO" id="GO:0036166">
    <property type="term" value="P:phenotypic switching"/>
    <property type="evidence" value="ECO:0000315"/>
    <property type="project" value="MGI"/>
</dbReference>
<dbReference type="GO" id="GO:0006275">
    <property type="term" value="P:regulation of DNA replication"/>
    <property type="evidence" value="ECO:0000315"/>
    <property type="project" value="UniProtKB"/>
</dbReference>
<dbReference type="GO" id="GO:0006357">
    <property type="term" value="P:regulation of transcription by RNA polymerase II"/>
    <property type="evidence" value="ECO:0000315"/>
    <property type="project" value="MGI"/>
</dbReference>
<dbReference type="GO" id="GO:0007286">
    <property type="term" value="P:spermatid development"/>
    <property type="evidence" value="ECO:0000315"/>
    <property type="project" value="MGI"/>
</dbReference>
<dbReference type="GO" id="GO:0007130">
    <property type="term" value="P:synaptonemal complex assembly"/>
    <property type="evidence" value="ECO:0000315"/>
    <property type="project" value="MGI"/>
</dbReference>
<dbReference type="CDD" id="cd20905">
    <property type="entry name" value="EHMT_ZBD"/>
    <property type="match status" value="1"/>
</dbReference>
<dbReference type="CDD" id="cd10533">
    <property type="entry name" value="SET_EHMT2"/>
    <property type="match status" value="1"/>
</dbReference>
<dbReference type="FunFam" id="2.170.270.10:FF:000005">
    <property type="entry name" value="Euchromatic histone-lysine N-methyltransferase 2"/>
    <property type="match status" value="1"/>
</dbReference>
<dbReference type="FunFam" id="1.25.40.20:FF:000029">
    <property type="entry name" value="histone-lysine N-methyltransferase EHMT1 isoform X2"/>
    <property type="match status" value="1"/>
</dbReference>
<dbReference type="Gene3D" id="1.25.40.20">
    <property type="entry name" value="Ankyrin repeat-containing domain"/>
    <property type="match status" value="1"/>
</dbReference>
<dbReference type="Gene3D" id="2.170.270.10">
    <property type="entry name" value="SET domain"/>
    <property type="match status" value="1"/>
</dbReference>
<dbReference type="InterPro" id="IPR002110">
    <property type="entry name" value="Ankyrin_rpt"/>
</dbReference>
<dbReference type="InterPro" id="IPR036770">
    <property type="entry name" value="Ankyrin_rpt-contain_sf"/>
</dbReference>
<dbReference type="InterPro" id="IPR043550">
    <property type="entry name" value="EHMT1/EHMT2"/>
</dbReference>
<dbReference type="InterPro" id="IPR047762">
    <property type="entry name" value="EHMT_CRR"/>
</dbReference>
<dbReference type="InterPro" id="IPR007728">
    <property type="entry name" value="Pre-SET_dom"/>
</dbReference>
<dbReference type="InterPro" id="IPR001214">
    <property type="entry name" value="SET_dom"/>
</dbReference>
<dbReference type="InterPro" id="IPR046341">
    <property type="entry name" value="SET_dom_sf"/>
</dbReference>
<dbReference type="InterPro" id="IPR038034">
    <property type="entry name" value="SET_EHMT2"/>
</dbReference>
<dbReference type="PANTHER" id="PTHR46307">
    <property type="entry name" value="G9A, ISOFORM B"/>
    <property type="match status" value="1"/>
</dbReference>
<dbReference type="PANTHER" id="PTHR46307:SF1">
    <property type="entry name" value="HISTONE-LYSINE N-METHYLTRANSFERASE EHMT2"/>
    <property type="match status" value="1"/>
</dbReference>
<dbReference type="Pfam" id="PF00023">
    <property type="entry name" value="Ank"/>
    <property type="match status" value="1"/>
</dbReference>
<dbReference type="Pfam" id="PF12796">
    <property type="entry name" value="Ank_2"/>
    <property type="match status" value="2"/>
</dbReference>
<dbReference type="Pfam" id="PF21533">
    <property type="entry name" value="EHMT1-2_CRR"/>
    <property type="match status" value="1"/>
</dbReference>
<dbReference type="Pfam" id="PF05033">
    <property type="entry name" value="Pre-SET"/>
    <property type="match status" value="1"/>
</dbReference>
<dbReference type="Pfam" id="PF00856">
    <property type="entry name" value="SET"/>
    <property type="match status" value="1"/>
</dbReference>
<dbReference type="PRINTS" id="PR01415">
    <property type="entry name" value="ANKYRIN"/>
</dbReference>
<dbReference type="SMART" id="SM00248">
    <property type="entry name" value="ANK"/>
    <property type="match status" value="6"/>
</dbReference>
<dbReference type="SMART" id="SM00468">
    <property type="entry name" value="PreSET"/>
    <property type="match status" value="1"/>
</dbReference>
<dbReference type="SMART" id="SM00317">
    <property type="entry name" value="SET"/>
    <property type="match status" value="1"/>
</dbReference>
<dbReference type="SUPFAM" id="SSF48403">
    <property type="entry name" value="Ankyrin repeat"/>
    <property type="match status" value="1"/>
</dbReference>
<dbReference type="SUPFAM" id="SSF82199">
    <property type="entry name" value="SET domain"/>
    <property type="match status" value="1"/>
</dbReference>
<dbReference type="PROSITE" id="PS50297">
    <property type="entry name" value="ANK_REP_REGION"/>
    <property type="match status" value="1"/>
</dbReference>
<dbReference type="PROSITE" id="PS50088">
    <property type="entry name" value="ANK_REPEAT"/>
    <property type="match status" value="5"/>
</dbReference>
<dbReference type="PROSITE" id="PS50867">
    <property type="entry name" value="PRE_SET"/>
    <property type="match status" value="1"/>
</dbReference>
<dbReference type="PROSITE" id="PS50280">
    <property type="entry name" value="SET"/>
    <property type="match status" value="1"/>
</dbReference>
<comment type="function">
    <text evidence="7 8 10 12">Histone methyltransferase that specifically mono- and dimethylates 'Lys-9' of histone H3 (H3K9me1 and H3K9me2, respectively) in euchromatin. H3K9me represents a specific tag for epigenetic transcriptional repression by recruiting HP1 proteins to methylated histones. Also mediates monomethylation of 'Lys-56' of histone H3 (H3K56me1) in G1 phase, leading to promote interaction between histone H3 and PCNA and regulating DNA replication. Also weakly methylates 'Lys-27' of histone H3 (H3K27me). Also required for DNA methylation, the histone methyltransferase activity is not required for DNA methylation, suggesting that these 2 activities function independently. Probably targeted to histone H3 by different DNA-binding proteins like E2F6, MGA, MAX and/or DP1. May also methylate histone H1. In addition to the histone methyltransferase activity, also methylates non-histone proteins: mediates dimethylation of 'Lys-373' of p53/TP53. Also methylates CDYL, WIZ, ACIN1, DNMT1, HDAC1, ERCC6, KLF12 and itself.</text>
</comment>
<comment type="catalytic activity">
    <reaction evidence="6 8">
        <text>N(6)-methyl-L-lysyl(9)-[histone H3] + S-adenosyl-L-methionine = N(6),N(6)-dimethyl-L-lysyl(9)-[histone H3] + S-adenosyl-L-homocysteine + H(+)</text>
        <dbReference type="Rhea" id="RHEA:60284"/>
        <dbReference type="Rhea" id="RHEA-COMP:15541"/>
        <dbReference type="Rhea" id="RHEA-COMP:15542"/>
        <dbReference type="ChEBI" id="CHEBI:15378"/>
        <dbReference type="ChEBI" id="CHEBI:57856"/>
        <dbReference type="ChEBI" id="CHEBI:59789"/>
        <dbReference type="ChEBI" id="CHEBI:61929"/>
        <dbReference type="ChEBI" id="CHEBI:61976"/>
    </reaction>
</comment>
<comment type="catalytic activity">
    <reaction evidence="6 8">
        <text>L-lysyl(9)-[histone H3] + S-adenosyl-L-methionine = N(6)-methyl-L-lysyl(9)-[histone H3] + S-adenosyl-L-homocysteine + H(+)</text>
        <dbReference type="Rhea" id="RHEA:60280"/>
        <dbReference type="Rhea" id="RHEA-COMP:15542"/>
        <dbReference type="Rhea" id="RHEA-COMP:15546"/>
        <dbReference type="ChEBI" id="CHEBI:15378"/>
        <dbReference type="ChEBI" id="CHEBI:29969"/>
        <dbReference type="ChEBI" id="CHEBI:57856"/>
        <dbReference type="ChEBI" id="CHEBI:59789"/>
        <dbReference type="ChEBI" id="CHEBI:61929"/>
        <dbReference type="EC" id="2.1.1.367"/>
    </reaction>
</comment>
<comment type="subunit">
    <text evidence="2 8 9 11 13 14">Heterodimer; heterodimerizes with EHMT1/GLP (PubMed:15774718, PubMed:16702210). Interacts with GFI1B and WIZ (PubMed:16702210). Part of the E2F6.com-1 complex in G0 phase composed of E2F6, MGA, MAX, TFDP1, CBX3, BAT8, EHMT1, RING1, RNF2, MBLR, L3MBTL2 and YAF2 (By similarity). Part of a complex composed of TRIM28, HDAC1, HDAC2 and EHMT2. Interacts with UHRF1 (PubMed:19056828). Interacts with CDYL. Interacts with REST only in the presence of CDYL. Part of a complex containing at least CDYL, REST, WIZ, SETB1, EHMT1 and EHMT2 (By similarity). Interacts with PRDM9 and CDYL; interaction only takes place when PRDM9 is bound to hotspot DNA (PubMed:27932493). Interacts with SMYD5 (PubMed:28250819).</text>
</comment>
<comment type="interaction">
    <interactant intactId="EBI-444966">
        <id>Q9Z148</id>
    </interactant>
    <interactant intactId="EBI-4287943">
        <id>O70237</id>
        <label>Gfi1b</label>
    </interactant>
    <organismsDiffer>false</organismsDiffer>
    <experiments>2</experiments>
</comment>
<comment type="interaction">
    <interactant intactId="EBI-444966">
        <id>Q9Z148</id>
    </interactant>
    <interactant intactId="EBI-925334">
        <id>P09631</id>
        <label>Hoxa9</label>
    </interactant>
    <organismsDiffer>false</organismsDiffer>
    <experiments>2</experiments>
</comment>
<comment type="interaction">
    <interactant intactId="EBI-444981">
        <id>Q9Z148-1</id>
    </interactant>
    <interactant intactId="EBI-6554737">
        <id>Q07279</id>
        <label>Nfe2</label>
    </interactant>
    <organismsDiffer>false</organismsDiffer>
    <experiments>4</experiments>
</comment>
<comment type="interaction">
    <interactant intactId="EBI-15737169">
        <id>Q9Z148-2</id>
    </interactant>
    <interactant intactId="EBI-15650457">
        <id>O88508-1</id>
        <label>Dnmt3a</label>
    </interactant>
    <organismsDiffer>false</organismsDiffer>
    <experiments>3</experiments>
</comment>
<comment type="interaction">
    <interactant intactId="EBI-15737169">
        <id>Q9Z148-2</id>
    </interactant>
    <interactant intactId="EBI-7987547">
        <id>O88509</id>
        <label>Dnmt3b</label>
    </interactant>
    <organismsDiffer>false</organismsDiffer>
    <experiments>3</experiments>
</comment>
<comment type="subcellular location">
    <subcellularLocation>
        <location evidence="2">Nucleus</location>
    </subcellularLocation>
    <subcellularLocation>
        <location evidence="2">Chromosome</location>
    </subcellularLocation>
    <text evidence="2">Almost excluded form nucleoli. Associates with euchromatic regions (By similarity). Does not associate with heterochromatin (By similarity).</text>
</comment>
<comment type="alternative products">
    <event type="alternative splicing"/>
    <isoform>
        <id>Q9Z148-1</id>
        <name>1</name>
        <name>G9a-L</name>
        <sequence type="displayed"/>
    </isoform>
    <isoform>
        <id>Q9Z148-2</id>
        <name>2</name>
        <name>G9a-S</name>
        <sequence type="described" ref="VSP_002214 VSP_002215 VSP_002216"/>
    </isoform>
    <isoform>
        <id>Q9Z148-3</id>
        <name>3</name>
        <sequence type="described" ref="VSP_002214 VSP_002215"/>
    </isoform>
</comment>
<comment type="tissue specificity">
    <text evidence="8">Ubiquitous.</text>
</comment>
<comment type="domain">
    <text evidence="1">The ANK repeats bind H3K9me1 and H3K9me2.</text>
</comment>
<comment type="domain">
    <text>The SET domain mediates interaction with WIZ.</text>
</comment>
<comment type="domain">
    <text evidence="1">In the pre-SET domain, Cys residues bind 3 zinc ions that are arranged in a triangular cluster; some of these Cys residues contribute to the binding of two zinc ions within the cluster.</text>
</comment>
<comment type="PTM">
    <text evidence="1">Methylated at Lys-239; automethylated.</text>
</comment>
<comment type="disruption phenotype">
    <text evidence="7">Mice show a higher level of histone H3 with acetylated 'Lys-9' (H3K9ac) and/or methylated 'Lys-4' (H3K4me), display severe developmental defects and die within E9.5-E12.5 stages.</text>
</comment>
<comment type="similarity">
    <text evidence="4">Belongs to the class V-like SAM-binding methyltransferase superfamily. Histone-lysine methyltransferase family. Suvar3-9 subfamily.</text>
</comment>
<comment type="caution">
    <text evidence="18">Thought to interact with MSX1. However the paper has been retracted over concerns of image tampering.</text>
</comment>
<comment type="caution">
    <text evidence="17">NG36 and G9a were originally thought to derive from two separate genes.</text>
</comment>
<comment type="sequence caution" evidence="17">
    <conflict type="erroneous gene model prediction">
        <sequence resource="EMBL-CDS" id="AAC84164"/>
    </conflict>
</comment>
<comment type="sequence caution" evidence="17">
    <conflict type="erroneous gene model prediction">
        <sequence resource="EMBL-CDS" id="AAC84165"/>
    </conflict>
</comment>
<comment type="sequence caution" evidence="17">
    <conflict type="erroneous initiation">
        <sequence resource="EMBL-CDS" id="AAH25539"/>
    </conflict>
    <text>Extended N-terminus.</text>
</comment>
<comment type="sequence caution" evidence="17">
    <conflict type="erroneous initiation">
        <sequence resource="EMBL-CDS" id="AAH58357"/>
    </conflict>
    <text>Extended N-terminus.</text>
</comment>
<gene>
    <name type="primary">Ehmt2</name>
    <name type="synonym">Bat8</name>
    <name type="synonym">G9a</name>
    <name type="synonym">Ng36</name>
</gene>